<reference key="1">
    <citation type="journal article" date="2005" name="Science">
        <title>The transcriptional landscape of the mammalian genome.</title>
        <authorList>
            <person name="Carninci P."/>
            <person name="Kasukawa T."/>
            <person name="Katayama S."/>
            <person name="Gough J."/>
            <person name="Frith M.C."/>
            <person name="Maeda N."/>
            <person name="Oyama R."/>
            <person name="Ravasi T."/>
            <person name="Lenhard B."/>
            <person name="Wells C."/>
            <person name="Kodzius R."/>
            <person name="Shimokawa K."/>
            <person name="Bajic V.B."/>
            <person name="Brenner S.E."/>
            <person name="Batalov S."/>
            <person name="Forrest A.R."/>
            <person name="Zavolan M."/>
            <person name="Davis M.J."/>
            <person name="Wilming L.G."/>
            <person name="Aidinis V."/>
            <person name="Allen J.E."/>
            <person name="Ambesi-Impiombato A."/>
            <person name="Apweiler R."/>
            <person name="Aturaliya R.N."/>
            <person name="Bailey T.L."/>
            <person name="Bansal M."/>
            <person name="Baxter L."/>
            <person name="Beisel K.W."/>
            <person name="Bersano T."/>
            <person name="Bono H."/>
            <person name="Chalk A.M."/>
            <person name="Chiu K.P."/>
            <person name="Choudhary V."/>
            <person name="Christoffels A."/>
            <person name="Clutterbuck D.R."/>
            <person name="Crowe M.L."/>
            <person name="Dalla E."/>
            <person name="Dalrymple B.P."/>
            <person name="de Bono B."/>
            <person name="Della Gatta G."/>
            <person name="di Bernardo D."/>
            <person name="Down T."/>
            <person name="Engstrom P."/>
            <person name="Fagiolini M."/>
            <person name="Faulkner G."/>
            <person name="Fletcher C.F."/>
            <person name="Fukushima T."/>
            <person name="Furuno M."/>
            <person name="Futaki S."/>
            <person name="Gariboldi M."/>
            <person name="Georgii-Hemming P."/>
            <person name="Gingeras T.R."/>
            <person name="Gojobori T."/>
            <person name="Green R.E."/>
            <person name="Gustincich S."/>
            <person name="Harbers M."/>
            <person name="Hayashi Y."/>
            <person name="Hensch T.K."/>
            <person name="Hirokawa N."/>
            <person name="Hill D."/>
            <person name="Huminiecki L."/>
            <person name="Iacono M."/>
            <person name="Ikeo K."/>
            <person name="Iwama A."/>
            <person name="Ishikawa T."/>
            <person name="Jakt M."/>
            <person name="Kanapin A."/>
            <person name="Katoh M."/>
            <person name="Kawasawa Y."/>
            <person name="Kelso J."/>
            <person name="Kitamura H."/>
            <person name="Kitano H."/>
            <person name="Kollias G."/>
            <person name="Krishnan S.P."/>
            <person name="Kruger A."/>
            <person name="Kummerfeld S.K."/>
            <person name="Kurochkin I.V."/>
            <person name="Lareau L.F."/>
            <person name="Lazarevic D."/>
            <person name="Lipovich L."/>
            <person name="Liu J."/>
            <person name="Liuni S."/>
            <person name="McWilliam S."/>
            <person name="Madan Babu M."/>
            <person name="Madera M."/>
            <person name="Marchionni L."/>
            <person name="Matsuda H."/>
            <person name="Matsuzawa S."/>
            <person name="Miki H."/>
            <person name="Mignone F."/>
            <person name="Miyake S."/>
            <person name="Morris K."/>
            <person name="Mottagui-Tabar S."/>
            <person name="Mulder N."/>
            <person name="Nakano N."/>
            <person name="Nakauchi H."/>
            <person name="Ng P."/>
            <person name="Nilsson R."/>
            <person name="Nishiguchi S."/>
            <person name="Nishikawa S."/>
            <person name="Nori F."/>
            <person name="Ohara O."/>
            <person name="Okazaki Y."/>
            <person name="Orlando V."/>
            <person name="Pang K.C."/>
            <person name="Pavan W.J."/>
            <person name="Pavesi G."/>
            <person name="Pesole G."/>
            <person name="Petrovsky N."/>
            <person name="Piazza S."/>
            <person name="Reed J."/>
            <person name="Reid J.F."/>
            <person name="Ring B.Z."/>
            <person name="Ringwald M."/>
            <person name="Rost B."/>
            <person name="Ruan Y."/>
            <person name="Salzberg S.L."/>
            <person name="Sandelin A."/>
            <person name="Schneider C."/>
            <person name="Schoenbach C."/>
            <person name="Sekiguchi K."/>
            <person name="Semple C.A."/>
            <person name="Seno S."/>
            <person name="Sessa L."/>
            <person name="Sheng Y."/>
            <person name="Shibata Y."/>
            <person name="Shimada H."/>
            <person name="Shimada K."/>
            <person name="Silva D."/>
            <person name="Sinclair B."/>
            <person name="Sperling S."/>
            <person name="Stupka E."/>
            <person name="Sugiura K."/>
            <person name="Sultana R."/>
            <person name="Takenaka Y."/>
            <person name="Taki K."/>
            <person name="Tammoja K."/>
            <person name="Tan S.L."/>
            <person name="Tang S."/>
            <person name="Taylor M.S."/>
            <person name="Tegner J."/>
            <person name="Teichmann S.A."/>
            <person name="Ueda H.R."/>
            <person name="van Nimwegen E."/>
            <person name="Verardo R."/>
            <person name="Wei C.L."/>
            <person name="Yagi K."/>
            <person name="Yamanishi H."/>
            <person name="Zabarovsky E."/>
            <person name="Zhu S."/>
            <person name="Zimmer A."/>
            <person name="Hide W."/>
            <person name="Bult C."/>
            <person name="Grimmond S.M."/>
            <person name="Teasdale R.D."/>
            <person name="Liu E.T."/>
            <person name="Brusic V."/>
            <person name="Quackenbush J."/>
            <person name="Wahlestedt C."/>
            <person name="Mattick J.S."/>
            <person name="Hume D.A."/>
            <person name="Kai C."/>
            <person name="Sasaki D."/>
            <person name="Tomaru Y."/>
            <person name="Fukuda S."/>
            <person name="Kanamori-Katayama M."/>
            <person name="Suzuki M."/>
            <person name="Aoki J."/>
            <person name="Arakawa T."/>
            <person name="Iida J."/>
            <person name="Imamura K."/>
            <person name="Itoh M."/>
            <person name="Kato T."/>
            <person name="Kawaji H."/>
            <person name="Kawagashira N."/>
            <person name="Kawashima T."/>
            <person name="Kojima M."/>
            <person name="Kondo S."/>
            <person name="Konno H."/>
            <person name="Nakano K."/>
            <person name="Ninomiya N."/>
            <person name="Nishio T."/>
            <person name="Okada M."/>
            <person name="Plessy C."/>
            <person name="Shibata K."/>
            <person name="Shiraki T."/>
            <person name="Suzuki S."/>
            <person name="Tagami M."/>
            <person name="Waki K."/>
            <person name="Watahiki A."/>
            <person name="Okamura-Oho Y."/>
            <person name="Suzuki H."/>
            <person name="Kawai J."/>
            <person name="Hayashizaki Y."/>
        </authorList>
    </citation>
    <scope>NUCLEOTIDE SEQUENCE [LARGE SCALE MRNA]</scope>
    <source>
        <strain>C57BL/6J</strain>
        <tissue>Brain cortex</tissue>
        <tissue>Retina</tissue>
        <tissue>Testis</tissue>
    </source>
</reference>
<reference key="2">
    <citation type="journal article" date="2004" name="Genome Res.">
        <title>The status, quality, and expansion of the NIH full-length cDNA project: the Mammalian Gene Collection (MGC).</title>
        <authorList>
            <consortium name="The MGC Project Team"/>
        </authorList>
    </citation>
    <scope>NUCLEOTIDE SEQUENCE [LARGE SCALE MRNA]</scope>
    <source>
        <strain>C57BL/6J</strain>
        <tissue>Embryonic brain</tissue>
    </source>
</reference>
<reference key="3">
    <citation type="journal article" date="2010" name="Cell">
        <title>A tissue-specific atlas of mouse protein phosphorylation and expression.</title>
        <authorList>
            <person name="Huttlin E.L."/>
            <person name="Jedrychowski M.P."/>
            <person name="Elias J.E."/>
            <person name="Goswami T."/>
            <person name="Rad R."/>
            <person name="Beausoleil S.A."/>
            <person name="Villen J."/>
            <person name="Haas W."/>
            <person name="Sowa M.E."/>
            <person name="Gygi S.P."/>
        </authorList>
    </citation>
    <scope>PHOSPHORYLATION [LARGE SCALE ANALYSIS] AT SER-165</scope>
    <scope>IDENTIFICATION BY MASS SPECTROMETRY [LARGE SCALE ANALYSIS]</scope>
    <source>
        <tissue>Kidney</tissue>
        <tissue>Lung</tissue>
        <tissue>Spleen</tissue>
        <tissue>Testis</tissue>
    </source>
</reference>
<dbReference type="EMBL" id="AK016628">
    <property type="protein sequence ID" value="BAB30346.2"/>
    <property type="molecule type" value="mRNA"/>
</dbReference>
<dbReference type="EMBL" id="AK044181">
    <property type="protein sequence ID" value="BAC31806.1"/>
    <property type="molecule type" value="mRNA"/>
</dbReference>
<dbReference type="EMBL" id="AK044737">
    <property type="protein sequence ID" value="BAC32058.1"/>
    <property type="molecule type" value="mRNA"/>
</dbReference>
<dbReference type="EMBL" id="BC079658">
    <property type="protein sequence ID" value="AAH79658.1"/>
    <property type="molecule type" value="mRNA"/>
</dbReference>
<dbReference type="CCDS" id="CCDS26914.1"/>
<dbReference type="RefSeq" id="NP_083208.1">
    <property type="nucleotide sequence ID" value="NM_028932.4"/>
</dbReference>
<dbReference type="SMR" id="Q9D4C5"/>
<dbReference type="BioGRID" id="216740">
    <property type="interactions" value="1"/>
</dbReference>
<dbReference type="FunCoup" id="Q9D4C5">
    <property type="interactions" value="3017"/>
</dbReference>
<dbReference type="STRING" id="10090.ENSMUSP00000022446"/>
<dbReference type="iPTMnet" id="Q9D4C5"/>
<dbReference type="PhosphoSitePlus" id="Q9D4C5"/>
<dbReference type="jPOST" id="Q9D4C5"/>
<dbReference type="PaxDb" id="10090-ENSMUSP00000022446"/>
<dbReference type="PeptideAtlas" id="Q9D4C5"/>
<dbReference type="ProteomicsDB" id="277665"/>
<dbReference type="Antibodypedia" id="26754">
    <property type="antibodies" value="130 antibodies from 22 providers"/>
</dbReference>
<dbReference type="Ensembl" id="ENSMUST00000022446.7">
    <property type="protein sequence ID" value="ENSMUSP00000022446.6"/>
    <property type="gene ID" value="ENSMUSG00000021890.7"/>
</dbReference>
<dbReference type="GeneID" id="74427"/>
<dbReference type="KEGG" id="mmu:74427"/>
<dbReference type="UCSC" id="uc007sxt.2">
    <property type="organism name" value="mouse"/>
</dbReference>
<dbReference type="AGR" id="MGI:1921677"/>
<dbReference type="CTD" id="85403"/>
<dbReference type="MGI" id="MGI:1921677">
    <property type="gene designation" value="Eaf1"/>
</dbReference>
<dbReference type="VEuPathDB" id="HostDB:ENSMUSG00000021890"/>
<dbReference type="eggNOG" id="KOG4795">
    <property type="taxonomic scope" value="Eukaryota"/>
</dbReference>
<dbReference type="GeneTree" id="ENSGT00390000017724"/>
<dbReference type="HOGENOM" id="CLU_025755_0_0_1"/>
<dbReference type="InParanoid" id="Q9D4C5"/>
<dbReference type="OMA" id="FRAPMKP"/>
<dbReference type="OrthoDB" id="125903at2759"/>
<dbReference type="PhylomeDB" id="Q9D4C5"/>
<dbReference type="TreeFam" id="TF320864"/>
<dbReference type="Reactome" id="R-MMU-112382">
    <property type="pathway name" value="Formation of RNA Pol II elongation complex"/>
</dbReference>
<dbReference type="Reactome" id="R-MMU-674695">
    <property type="pathway name" value="RNA Polymerase II Pre-transcription Events"/>
</dbReference>
<dbReference type="Reactome" id="R-MMU-75955">
    <property type="pathway name" value="RNA Polymerase II Transcription Elongation"/>
</dbReference>
<dbReference type="BioGRID-ORCS" id="74427">
    <property type="hits" value="14 hits in 78 CRISPR screens"/>
</dbReference>
<dbReference type="ChiTaRS" id="Eaf1">
    <property type="organism name" value="mouse"/>
</dbReference>
<dbReference type="PRO" id="PR:Q9D4C5"/>
<dbReference type="Proteomes" id="UP000000589">
    <property type="component" value="Chromosome 14"/>
</dbReference>
<dbReference type="RNAct" id="Q9D4C5">
    <property type="molecule type" value="protein"/>
</dbReference>
<dbReference type="Bgee" id="ENSMUSG00000021890">
    <property type="expression patterns" value="Expressed in epithelium of lens and 226 other cell types or tissues"/>
</dbReference>
<dbReference type="GO" id="GO:0015030">
    <property type="term" value="C:Cajal body"/>
    <property type="evidence" value="ECO:0007669"/>
    <property type="project" value="UniProtKB-SubCell"/>
</dbReference>
<dbReference type="GO" id="GO:0045171">
    <property type="term" value="C:intercellular bridge"/>
    <property type="evidence" value="ECO:0007669"/>
    <property type="project" value="Ensembl"/>
</dbReference>
<dbReference type="GO" id="GO:0016607">
    <property type="term" value="C:nuclear speck"/>
    <property type="evidence" value="ECO:0007669"/>
    <property type="project" value="UniProtKB-SubCell"/>
</dbReference>
<dbReference type="GO" id="GO:0005634">
    <property type="term" value="C:nucleus"/>
    <property type="evidence" value="ECO:0000266"/>
    <property type="project" value="MGI"/>
</dbReference>
<dbReference type="GO" id="GO:0032783">
    <property type="term" value="C:super elongation complex"/>
    <property type="evidence" value="ECO:0007669"/>
    <property type="project" value="InterPro"/>
</dbReference>
<dbReference type="GO" id="GO:0008023">
    <property type="term" value="C:transcription elongation factor complex"/>
    <property type="evidence" value="ECO:0000250"/>
    <property type="project" value="UniProtKB"/>
</dbReference>
<dbReference type="GO" id="GO:0003711">
    <property type="term" value="F:transcription elongation factor activity"/>
    <property type="evidence" value="ECO:0007669"/>
    <property type="project" value="Ensembl"/>
</dbReference>
<dbReference type="GO" id="GO:0045944">
    <property type="term" value="P:positive regulation of transcription by RNA polymerase II"/>
    <property type="evidence" value="ECO:0000266"/>
    <property type="project" value="MGI"/>
</dbReference>
<dbReference type="GO" id="GO:0034243">
    <property type="term" value="P:regulation of transcription elongation by RNA polymerase II"/>
    <property type="evidence" value="ECO:0007669"/>
    <property type="project" value="Ensembl"/>
</dbReference>
<dbReference type="GO" id="GO:0006368">
    <property type="term" value="P:transcription elongation by RNA polymerase II"/>
    <property type="evidence" value="ECO:0007669"/>
    <property type="project" value="InterPro"/>
</dbReference>
<dbReference type="InterPro" id="IPR027093">
    <property type="entry name" value="EAF_fam"/>
</dbReference>
<dbReference type="InterPro" id="IPR019194">
    <property type="entry name" value="Tscrpt_elong_fac_Eaf_N"/>
</dbReference>
<dbReference type="PANTHER" id="PTHR15970:SF8">
    <property type="entry name" value="ELL-ASSOCIATED FACTOR 1"/>
    <property type="match status" value="1"/>
</dbReference>
<dbReference type="PANTHER" id="PTHR15970">
    <property type="entry name" value="ELL-ASSOCIATED FACTOR EAF"/>
    <property type="match status" value="1"/>
</dbReference>
<dbReference type="Pfam" id="PF09816">
    <property type="entry name" value="EAF"/>
    <property type="match status" value="1"/>
</dbReference>
<comment type="function">
    <text evidence="1">Acts as a transcriptional transactivator of ELL and ELL2 elongation activities.</text>
</comment>
<comment type="subunit">
    <text evidence="1">Component of the super elongation complex (SEC), at least composed of EAF1, EAF2, CDK9, MLLT3/AF9, AFF (AFF1 or AFF4), the P-TEFb complex and ELL (ELL, ELL2 or ELL3). Interacts with ELL and ELL2 (By similarity).</text>
</comment>
<comment type="subcellular location">
    <subcellularLocation>
        <location evidence="2">Nucleus speckle</location>
    </subcellularLocation>
    <subcellularLocation>
        <location evidence="2">Nucleus</location>
        <location evidence="2">Cajal body</location>
    </subcellularLocation>
</comment>
<comment type="similarity">
    <text evidence="4">Belongs to the EAF family.</text>
</comment>
<evidence type="ECO:0000250" key="1"/>
<evidence type="ECO:0000250" key="2">
    <source>
        <dbReference type="UniProtKB" id="Q96JC9"/>
    </source>
</evidence>
<evidence type="ECO:0000256" key="3">
    <source>
        <dbReference type="SAM" id="MobiDB-lite"/>
    </source>
</evidence>
<evidence type="ECO:0000305" key="4"/>
<evidence type="ECO:0007744" key="5">
    <source>
    </source>
</evidence>
<sequence length="268" mass="28967">MNGTANPLLDREEHCLRLGESFEKRPRASFHTIRYDFKPASIDTSCEGELQVGKGDEVTITLPHIPGSTPPMTVFKGNKRPYQKDCVLIINHDTGEYVLEKLSSSIQVKKTRAEGSSKIQARMEQQPARPPQPSQPPPPPPPMPFRAPTKPPAGPKTSPLKDNPSPEPQLDDIKRELRAEVDIIEQMSSSSGSSSSDSESSSGSDDDSSSSAGEDNGPASPPQPSHQQPYNSRPAVANGTSRPQGSSQLMNTLRNDLQLSESGSDSDD</sequence>
<protein>
    <recommendedName>
        <fullName>ELL-associated factor 1</fullName>
    </recommendedName>
</protein>
<proteinExistence type="evidence at protein level"/>
<accession>Q9D4C5</accession>
<feature type="chain" id="PRO_0000130335" description="ELL-associated factor 1">
    <location>
        <begin position="1"/>
        <end position="268"/>
    </location>
</feature>
<feature type="region of interest" description="Disordered" evidence="3">
    <location>
        <begin position="106"/>
        <end position="268"/>
    </location>
</feature>
<feature type="region of interest" description="Necessary for transactivation activity" evidence="1">
    <location>
        <begin position="182"/>
        <end position="262"/>
    </location>
</feature>
<feature type="compositionally biased region" description="Pro residues" evidence="3">
    <location>
        <begin position="128"/>
        <end position="154"/>
    </location>
</feature>
<feature type="compositionally biased region" description="Basic and acidic residues" evidence="3">
    <location>
        <begin position="171"/>
        <end position="181"/>
    </location>
</feature>
<feature type="compositionally biased region" description="Low complexity" evidence="3">
    <location>
        <begin position="188"/>
        <end position="203"/>
    </location>
</feature>
<feature type="compositionally biased region" description="Polar residues" evidence="3">
    <location>
        <begin position="238"/>
        <end position="268"/>
    </location>
</feature>
<feature type="modified residue" description="Phosphoserine" evidence="5">
    <location>
        <position position="165"/>
    </location>
</feature>
<keyword id="KW-0010">Activator</keyword>
<keyword id="KW-0539">Nucleus</keyword>
<keyword id="KW-0597">Phosphoprotein</keyword>
<keyword id="KW-1185">Reference proteome</keyword>
<keyword id="KW-0804">Transcription</keyword>
<keyword id="KW-0805">Transcription regulation</keyword>
<organism>
    <name type="scientific">Mus musculus</name>
    <name type="common">Mouse</name>
    <dbReference type="NCBI Taxonomy" id="10090"/>
    <lineage>
        <taxon>Eukaryota</taxon>
        <taxon>Metazoa</taxon>
        <taxon>Chordata</taxon>
        <taxon>Craniata</taxon>
        <taxon>Vertebrata</taxon>
        <taxon>Euteleostomi</taxon>
        <taxon>Mammalia</taxon>
        <taxon>Eutheria</taxon>
        <taxon>Euarchontoglires</taxon>
        <taxon>Glires</taxon>
        <taxon>Rodentia</taxon>
        <taxon>Myomorpha</taxon>
        <taxon>Muroidea</taxon>
        <taxon>Muridae</taxon>
        <taxon>Murinae</taxon>
        <taxon>Mus</taxon>
        <taxon>Mus</taxon>
    </lineage>
</organism>
<name>EAF1_MOUSE</name>
<gene>
    <name type="primary">Eaf1</name>
</gene>